<gene>
    <name evidence="1" type="primary">nuoK</name>
    <name type="ordered locus">BUAPTUC7_162</name>
</gene>
<dbReference type="EC" id="7.1.1.-" evidence="1"/>
<dbReference type="EMBL" id="CP001158">
    <property type="protein sequence ID" value="ACL29983.1"/>
    <property type="molecule type" value="Genomic_DNA"/>
</dbReference>
<dbReference type="RefSeq" id="WP_009874119.1">
    <property type="nucleotide sequence ID" value="NC_011834.1"/>
</dbReference>
<dbReference type="SMR" id="B8D768"/>
<dbReference type="KEGG" id="bau:BUAPTUC7_162"/>
<dbReference type="HOGENOM" id="CLU_144724_0_1_6"/>
<dbReference type="GO" id="GO:0030964">
    <property type="term" value="C:NADH dehydrogenase complex"/>
    <property type="evidence" value="ECO:0007669"/>
    <property type="project" value="TreeGrafter"/>
</dbReference>
<dbReference type="GO" id="GO:0005886">
    <property type="term" value="C:plasma membrane"/>
    <property type="evidence" value="ECO:0007669"/>
    <property type="project" value="UniProtKB-SubCell"/>
</dbReference>
<dbReference type="GO" id="GO:0050136">
    <property type="term" value="F:NADH:ubiquinone reductase (non-electrogenic) activity"/>
    <property type="evidence" value="ECO:0007669"/>
    <property type="project" value="UniProtKB-UniRule"/>
</dbReference>
<dbReference type="GO" id="GO:0048038">
    <property type="term" value="F:quinone binding"/>
    <property type="evidence" value="ECO:0007669"/>
    <property type="project" value="UniProtKB-KW"/>
</dbReference>
<dbReference type="GO" id="GO:0042773">
    <property type="term" value="P:ATP synthesis coupled electron transport"/>
    <property type="evidence" value="ECO:0007669"/>
    <property type="project" value="InterPro"/>
</dbReference>
<dbReference type="FunFam" id="1.10.287.3510:FF:000001">
    <property type="entry name" value="NADH-quinone oxidoreductase subunit K"/>
    <property type="match status" value="1"/>
</dbReference>
<dbReference type="Gene3D" id="1.10.287.3510">
    <property type="match status" value="1"/>
</dbReference>
<dbReference type="HAMAP" id="MF_01456">
    <property type="entry name" value="NDH1_NuoK"/>
    <property type="match status" value="1"/>
</dbReference>
<dbReference type="InterPro" id="IPR001133">
    <property type="entry name" value="NADH_UbQ_OxRdtase_chain4L/K"/>
</dbReference>
<dbReference type="InterPro" id="IPR039428">
    <property type="entry name" value="NUOK/Mnh_C1-like"/>
</dbReference>
<dbReference type="NCBIfam" id="NF004319">
    <property type="entry name" value="PRK05715.1-1"/>
    <property type="match status" value="1"/>
</dbReference>
<dbReference type="NCBIfam" id="NF004320">
    <property type="entry name" value="PRK05715.1-2"/>
    <property type="match status" value="1"/>
</dbReference>
<dbReference type="PANTHER" id="PTHR11434:SF16">
    <property type="entry name" value="NADH-UBIQUINONE OXIDOREDUCTASE CHAIN 4L"/>
    <property type="match status" value="1"/>
</dbReference>
<dbReference type="PANTHER" id="PTHR11434">
    <property type="entry name" value="NADH-UBIQUINONE OXIDOREDUCTASE SUBUNIT ND4L"/>
    <property type="match status" value="1"/>
</dbReference>
<dbReference type="Pfam" id="PF00420">
    <property type="entry name" value="Oxidored_q2"/>
    <property type="match status" value="1"/>
</dbReference>
<proteinExistence type="inferred from homology"/>
<name>NUOK_BUCAT</name>
<keyword id="KW-1003">Cell membrane</keyword>
<keyword id="KW-0472">Membrane</keyword>
<keyword id="KW-0520">NAD</keyword>
<keyword id="KW-0874">Quinone</keyword>
<keyword id="KW-1278">Translocase</keyword>
<keyword id="KW-0812">Transmembrane</keyword>
<keyword id="KW-1133">Transmembrane helix</keyword>
<keyword id="KW-0813">Transport</keyword>
<keyword id="KW-0830">Ubiquinone</keyword>
<feature type="chain" id="PRO_0000389980" description="NADH-quinone oxidoreductase subunit K">
    <location>
        <begin position="1"/>
        <end position="100"/>
    </location>
</feature>
<feature type="transmembrane region" description="Helical" evidence="1">
    <location>
        <begin position="4"/>
        <end position="24"/>
    </location>
</feature>
<feature type="transmembrane region" description="Helical" evidence="1">
    <location>
        <begin position="28"/>
        <end position="48"/>
    </location>
</feature>
<feature type="transmembrane region" description="Helical" evidence="1">
    <location>
        <begin position="60"/>
        <end position="80"/>
    </location>
</feature>
<reference key="1">
    <citation type="journal article" date="2009" name="Science">
        <title>The dynamics and time scale of ongoing genomic erosion in symbiotic bacteria.</title>
        <authorList>
            <person name="Moran N.A."/>
            <person name="McLaughlin H.J."/>
            <person name="Sorek R."/>
        </authorList>
    </citation>
    <scope>NUCLEOTIDE SEQUENCE [LARGE SCALE GENOMIC DNA]</scope>
    <source>
        <strain>Tuc7</strain>
    </source>
</reference>
<evidence type="ECO:0000255" key="1">
    <source>
        <dbReference type="HAMAP-Rule" id="MF_01456"/>
    </source>
</evidence>
<sequence>MISLFHGLFLSLILFILGLTSLIVRRNILFILISLEIMMNAVGLALIVVGSYWHQADGQIMYIFVITLAASEASIALALLLQLYRRKKTLNIDILSEMNG</sequence>
<comment type="function">
    <text evidence="1">NDH-1 shuttles electrons from NADH, via FMN and iron-sulfur (Fe-S) centers, to quinones in the respiratory chain. The immediate electron acceptor for the enzyme in this species is believed to be ubiquinone. Couples the redox reaction to proton translocation (for every two electrons transferred, four hydrogen ions are translocated across the cytoplasmic membrane), and thus conserves the redox energy in a proton gradient.</text>
</comment>
<comment type="catalytic activity">
    <reaction evidence="1">
        <text>a quinone + NADH + 5 H(+)(in) = a quinol + NAD(+) + 4 H(+)(out)</text>
        <dbReference type="Rhea" id="RHEA:57888"/>
        <dbReference type="ChEBI" id="CHEBI:15378"/>
        <dbReference type="ChEBI" id="CHEBI:24646"/>
        <dbReference type="ChEBI" id="CHEBI:57540"/>
        <dbReference type="ChEBI" id="CHEBI:57945"/>
        <dbReference type="ChEBI" id="CHEBI:132124"/>
    </reaction>
</comment>
<comment type="subunit">
    <text evidence="1">NDH-1 is composed of 13 different subunits. Subunits NuoA, H, J, K, L, M, N constitute the membrane sector of the complex.</text>
</comment>
<comment type="subcellular location">
    <subcellularLocation>
        <location evidence="1">Cell membrane</location>
        <topology evidence="1">Multi-pass membrane protein</topology>
    </subcellularLocation>
</comment>
<comment type="similarity">
    <text evidence="1">Belongs to the complex I subunit 4L family.</text>
</comment>
<organism>
    <name type="scientific">Buchnera aphidicola subsp. Acyrthosiphon pisum (strain Tuc7)</name>
    <dbReference type="NCBI Taxonomy" id="561501"/>
    <lineage>
        <taxon>Bacteria</taxon>
        <taxon>Pseudomonadati</taxon>
        <taxon>Pseudomonadota</taxon>
        <taxon>Gammaproteobacteria</taxon>
        <taxon>Enterobacterales</taxon>
        <taxon>Erwiniaceae</taxon>
        <taxon>Buchnera</taxon>
    </lineage>
</organism>
<accession>B8D768</accession>
<protein>
    <recommendedName>
        <fullName evidence="1">NADH-quinone oxidoreductase subunit K</fullName>
        <ecNumber evidence="1">7.1.1.-</ecNumber>
    </recommendedName>
    <alternativeName>
        <fullName evidence="1">NADH dehydrogenase I subunit K</fullName>
    </alternativeName>
    <alternativeName>
        <fullName evidence="1">NDH-1 subunit K</fullName>
    </alternativeName>
</protein>